<evidence type="ECO:0000255" key="1">
    <source>
        <dbReference type="HAMAP-Rule" id="MF_00011"/>
    </source>
</evidence>
<protein>
    <recommendedName>
        <fullName evidence="1">Adenylosuccinate synthetase</fullName>
        <shortName evidence="1">AMPSase</shortName>
        <shortName evidence="1">AdSS</shortName>
        <ecNumber evidence="1">6.3.4.4</ecNumber>
    </recommendedName>
    <alternativeName>
        <fullName evidence="1">IMP--aspartate ligase</fullName>
    </alternativeName>
</protein>
<proteinExistence type="inferred from homology"/>
<gene>
    <name evidence="1" type="primary">purA</name>
    <name type="ordered locus">BUAPTUC7_560</name>
</gene>
<sequence length="433" mass="48745">MNKNIVILGTQWGDEGKGKVVDCLTKDSSYVVRYQGGHNAGHTLVVNDKKIILHLIPSGLLHKNVIGIIANGVVVSPFELIKEIKMLETHNIFVHKRLFISNSSPLILQYHIEMDIAREKKLGISALGTTGRGIGPAYEDKIARRALRIGDLKNEKTLSIRLEKIVNYYNHQLVSFYKHKPVDYKIILRDLLPTIDLIYDMIKDTTSILHTAIQSNKKIIFEGAQGSFLDIDHGTYPYVTSSNSTIGGVITGTGVGSKSLDYILGVTKAYSTRVGYGPFPTELFDDVDKHFSKKGHEFGSTTGRKRRTGWLDAVALCRSVRINSLSGLCITKLDVLDGLYEIKICTAYKNINTLEIISFPDIDEWKNIEPIYETYPGWNKKTLGIKKLIDLPYEARNYINRIEEITQIPVDIISTGPDRSDIIFVRDIFFIKK</sequence>
<feature type="chain" id="PRO_1000116459" description="Adenylosuccinate synthetase">
    <location>
        <begin position="1"/>
        <end position="433"/>
    </location>
</feature>
<feature type="active site" description="Proton acceptor" evidence="1">
    <location>
        <position position="14"/>
    </location>
</feature>
<feature type="active site" description="Proton donor" evidence="1">
    <location>
        <position position="42"/>
    </location>
</feature>
<feature type="binding site" evidence="1">
    <location>
        <begin position="13"/>
        <end position="19"/>
    </location>
    <ligand>
        <name>GTP</name>
        <dbReference type="ChEBI" id="CHEBI:37565"/>
    </ligand>
</feature>
<feature type="binding site" description="in other chain" evidence="1">
    <location>
        <begin position="14"/>
        <end position="17"/>
    </location>
    <ligand>
        <name>IMP</name>
        <dbReference type="ChEBI" id="CHEBI:58053"/>
        <note>ligand shared between dimeric partners</note>
    </ligand>
</feature>
<feature type="binding site" evidence="1">
    <location>
        <position position="14"/>
    </location>
    <ligand>
        <name>Mg(2+)</name>
        <dbReference type="ChEBI" id="CHEBI:18420"/>
    </ligand>
</feature>
<feature type="binding site" description="in other chain" evidence="1">
    <location>
        <begin position="39"/>
        <end position="42"/>
    </location>
    <ligand>
        <name>IMP</name>
        <dbReference type="ChEBI" id="CHEBI:58053"/>
        <note>ligand shared between dimeric partners</note>
    </ligand>
</feature>
<feature type="binding site" evidence="1">
    <location>
        <begin position="41"/>
        <end position="43"/>
    </location>
    <ligand>
        <name>GTP</name>
        <dbReference type="ChEBI" id="CHEBI:37565"/>
    </ligand>
</feature>
<feature type="binding site" evidence="1">
    <location>
        <position position="41"/>
    </location>
    <ligand>
        <name>Mg(2+)</name>
        <dbReference type="ChEBI" id="CHEBI:18420"/>
    </ligand>
</feature>
<feature type="binding site" description="in other chain" evidence="1">
    <location>
        <position position="130"/>
    </location>
    <ligand>
        <name>IMP</name>
        <dbReference type="ChEBI" id="CHEBI:58053"/>
        <note>ligand shared between dimeric partners</note>
    </ligand>
</feature>
<feature type="binding site" evidence="1">
    <location>
        <position position="144"/>
    </location>
    <ligand>
        <name>IMP</name>
        <dbReference type="ChEBI" id="CHEBI:58053"/>
        <note>ligand shared between dimeric partners</note>
    </ligand>
</feature>
<feature type="binding site" description="in other chain" evidence="1">
    <location>
        <position position="225"/>
    </location>
    <ligand>
        <name>IMP</name>
        <dbReference type="ChEBI" id="CHEBI:58053"/>
        <note>ligand shared between dimeric partners</note>
    </ligand>
</feature>
<feature type="binding site" description="in other chain" evidence="1">
    <location>
        <position position="240"/>
    </location>
    <ligand>
        <name>IMP</name>
        <dbReference type="ChEBI" id="CHEBI:58053"/>
        <note>ligand shared between dimeric partners</note>
    </ligand>
</feature>
<feature type="binding site" evidence="1">
    <location>
        <begin position="300"/>
        <end position="306"/>
    </location>
    <ligand>
        <name>substrate</name>
    </ligand>
</feature>
<feature type="binding site" description="in other chain" evidence="1">
    <location>
        <position position="304"/>
    </location>
    <ligand>
        <name>IMP</name>
        <dbReference type="ChEBI" id="CHEBI:58053"/>
        <note>ligand shared between dimeric partners</note>
    </ligand>
</feature>
<feature type="binding site" evidence="1">
    <location>
        <position position="306"/>
    </location>
    <ligand>
        <name>GTP</name>
        <dbReference type="ChEBI" id="CHEBI:37565"/>
    </ligand>
</feature>
<feature type="binding site" evidence="1">
    <location>
        <begin position="332"/>
        <end position="334"/>
    </location>
    <ligand>
        <name>GTP</name>
        <dbReference type="ChEBI" id="CHEBI:37565"/>
    </ligand>
</feature>
<feature type="binding site" evidence="1">
    <location>
        <begin position="414"/>
        <end position="416"/>
    </location>
    <ligand>
        <name>GTP</name>
        <dbReference type="ChEBI" id="CHEBI:37565"/>
    </ligand>
</feature>
<accession>B8D887</accession>
<keyword id="KW-0963">Cytoplasm</keyword>
<keyword id="KW-0342">GTP-binding</keyword>
<keyword id="KW-0436">Ligase</keyword>
<keyword id="KW-0460">Magnesium</keyword>
<keyword id="KW-0479">Metal-binding</keyword>
<keyword id="KW-0547">Nucleotide-binding</keyword>
<keyword id="KW-0658">Purine biosynthesis</keyword>
<comment type="function">
    <text evidence="1">Plays an important role in the de novo pathway of purine nucleotide biosynthesis. Catalyzes the first committed step in the biosynthesis of AMP from IMP.</text>
</comment>
<comment type="catalytic activity">
    <reaction evidence="1">
        <text>IMP + L-aspartate + GTP = N(6)-(1,2-dicarboxyethyl)-AMP + GDP + phosphate + 2 H(+)</text>
        <dbReference type="Rhea" id="RHEA:15753"/>
        <dbReference type="ChEBI" id="CHEBI:15378"/>
        <dbReference type="ChEBI" id="CHEBI:29991"/>
        <dbReference type="ChEBI" id="CHEBI:37565"/>
        <dbReference type="ChEBI" id="CHEBI:43474"/>
        <dbReference type="ChEBI" id="CHEBI:57567"/>
        <dbReference type="ChEBI" id="CHEBI:58053"/>
        <dbReference type="ChEBI" id="CHEBI:58189"/>
        <dbReference type="EC" id="6.3.4.4"/>
    </reaction>
</comment>
<comment type="cofactor">
    <cofactor evidence="1">
        <name>Mg(2+)</name>
        <dbReference type="ChEBI" id="CHEBI:18420"/>
    </cofactor>
    <text evidence="1">Binds 1 Mg(2+) ion per subunit.</text>
</comment>
<comment type="pathway">
    <text evidence="1">Purine metabolism; AMP biosynthesis via de novo pathway; AMP from IMP: step 1/2.</text>
</comment>
<comment type="subunit">
    <text evidence="1">Homodimer.</text>
</comment>
<comment type="subcellular location">
    <subcellularLocation>
        <location evidence="1">Cytoplasm</location>
    </subcellularLocation>
</comment>
<comment type="similarity">
    <text evidence="1">Belongs to the adenylosuccinate synthetase family.</text>
</comment>
<name>PURA_BUCAT</name>
<dbReference type="EC" id="6.3.4.4" evidence="1"/>
<dbReference type="EMBL" id="CP001158">
    <property type="protein sequence ID" value="ACL30352.1"/>
    <property type="molecule type" value="Genomic_DNA"/>
</dbReference>
<dbReference type="RefSeq" id="WP_012619584.1">
    <property type="nucleotide sequence ID" value="NC_011834.1"/>
</dbReference>
<dbReference type="SMR" id="B8D887"/>
<dbReference type="KEGG" id="bau:BUAPTUC7_560"/>
<dbReference type="HOGENOM" id="CLU_029848_0_0_6"/>
<dbReference type="UniPathway" id="UPA00075">
    <property type="reaction ID" value="UER00335"/>
</dbReference>
<dbReference type="GO" id="GO:0005737">
    <property type="term" value="C:cytoplasm"/>
    <property type="evidence" value="ECO:0007669"/>
    <property type="project" value="UniProtKB-SubCell"/>
</dbReference>
<dbReference type="GO" id="GO:0004019">
    <property type="term" value="F:adenylosuccinate synthase activity"/>
    <property type="evidence" value="ECO:0007669"/>
    <property type="project" value="UniProtKB-UniRule"/>
</dbReference>
<dbReference type="GO" id="GO:0005525">
    <property type="term" value="F:GTP binding"/>
    <property type="evidence" value="ECO:0007669"/>
    <property type="project" value="UniProtKB-UniRule"/>
</dbReference>
<dbReference type="GO" id="GO:0000287">
    <property type="term" value="F:magnesium ion binding"/>
    <property type="evidence" value="ECO:0007669"/>
    <property type="project" value="UniProtKB-UniRule"/>
</dbReference>
<dbReference type="GO" id="GO:0044208">
    <property type="term" value="P:'de novo' AMP biosynthetic process"/>
    <property type="evidence" value="ECO:0007669"/>
    <property type="project" value="UniProtKB-UniRule"/>
</dbReference>
<dbReference type="GO" id="GO:0046040">
    <property type="term" value="P:IMP metabolic process"/>
    <property type="evidence" value="ECO:0007669"/>
    <property type="project" value="TreeGrafter"/>
</dbReference>
<dbReference type="CDD" id="cd03108">
    <property type="entry name" value="AdSS"/>
    <property type="match status" value="1"/>
</dbReference>
<dbReference type="FunFam" id="1.10.300.10:FF:000001">
    <property type="entry name" value="Adenylosuccinate synthetase"/>
    <property type="match status" value="1"/>
</dbReference>
<dbReference type="FunFam" id="3.90.170.10:FF:000001">
    <property type="entry name" value="Adenylosuccinate synthetase"/>
    <property type="match status" value="1"/>
</dbReference>
<dbReference type="Gene3D" id="3.40.440.10">
    <property type="entry name" value="Adenylosuccinate Synthetase, subunit A, domain 1"/>
    <property type="match status" value="1"/>
</dbReference>
<dbReference type="Gene3D" id="1.10.300.10">
    <property type="entry name" value="Adenylosuccinate Synthetase, subunit A, domain 2"/>
    <property type="match status" value="1"/>
</dbReference>
<dbReference type="Gene3D" id="3.90.170.10">
    <property type="entry name" value="Adenylosuccinate Synthetase, subunit A, domain 3"/>
    <property type="match status" value="1"/>
</dbReference>
<dbReference type="HAMAP" id="MF_00011">
    <property type="entry name" value="Adenylosucc_synth"/>
    <property type="match status" value="1"/>
</dbReference>
<dbReference type="InterPro" id="IPR018220">
    <property type="entry name" value="Adenylosuccin_syn_GTP-bd"/>
</dbReference>
<dbReference type="InterPro" id="IPR033128">
    <property type="entry name" value="Adenylosuccin_syn_Lys_AS"/>
</dbReference>
<dbReference type="InterPro" id="IPR042109">
    <property type="entry name" value="Adenylosuccinate_synth_dom1"/>
</dbReference>
<dbReference type="InterPro" id="IPR042110">
    <property type="entry name" value="Adenylosuccinate_synth_dom2"/>
</dbReference>
<dbReference type="InterPro" id="IPR042111">
    <property type="entry name" value="Adenylosuccinate_synth_dom3"/>
</dbReference>
<dbReference type="InterPro" id="IPR001114">
    <property type="entry name" value="Adenylosuccinate_synthetase"/>
</dbReference>
<dbReference type="InterPro" id="IPR027417">
    <property type="entry name" value="P-loop_NTPase"/>
</dbReference>
<dbReference type="NCBIfam" id="NF002223">
    <property type="entry name" value="PRK01117.1"/>
    <property type="match status" value="1"/>
</dbReference>
<dbReference type="NCBIfam" id="TIGR00184">
    <property type="entry name" value="purA"/>
    <property type="match status" value="1"/>
</dbReference>
<dbReference type="PANTHER" id="PTHR11846">
    <property type="entry name" value="ADENYLOSUCCINATE SYNTHETASE"/>
    <property type="match status" value="1"/>
</dbReference>
<dbReference type="PANTHER" id="PTHR11846:SF0">
    <property type="entry name" value="ADENYLOSUCCINATE SYNTHETASE"/>
    <property type="match status" value="1"/>
</dbReference>
<dbReference type="Pfam" id="PF00709">
    <property type="entry name" value="Adenylsucc_synt"/>
    <property type="match status" value="1"/>
</dbReference>
<dbReference type="SMART" id="SM00788">
    <property type="entry name" value="Adenylsucc_synt"/>
    <property type="match status" value="1"/>
</dbReference>
<dbReference type="SUPFAM" id="SSF52540">
    <property type="entry name" value="P-loop containing nucleoside triphosphate hydrolases"/>
    <property type="match status" value="1"/>
</dbReference>
<dbReference type="PROSITE" id="PS01266">
    <property type="entry name" value="ADENYLOSUCCIN_SYN_1"/>
    <property type="match status" value="1"/>
</dbReference>
<dbReference type="PROSITE" id="PS00513">
    <property type="entry name" value="ADENYLOSUCCIN_SYN_2"/>
    <property type="match status" value="1"/>
</dbReference>
<reference key="1">
    <citation type="journal article" date="2009" name="Science">
        <title>The dynamics and time scale of ongoing genomic erosion in symbiotic bacteria.</title>
        <authorList>
            <person name="Moran N.A."/>
            <person name="McLaughlin H.J."/>
            <person name="Sorek R."/>
        </authorList>
    </citation>
    <scope>NUCLEOTIDE SEQUENCE [LARGE SCALE GENOMIC DNA]</scope>
    <source>
        <strain>Tuc7</strain>
    </source>
</reference>
<organism>
    <name type="scientific">Buchnera aphidicola subsp. Acyrthosiphon pisum (strain Tuc7)</name>
    <dbReference type="NCBI Taxonomy" id="561501"/>
    <lineage>
        <taxon>Bacteria</taxon>
        <taxon>Pseudomonadati</taxon>
        <taxon>Pseudomonadota</taxon>
        <taxon>Gammaproteobacteria</taxon>
        <taxon>Enterobacterales</taxon>
        <taxon>Erwiniaceae</taxon>
        <taxon>Buchnera</taxon>
    </lineage>
</organism>